<feature type="chain" id="PRO_1000093999" description="4-hydroxy-tetrahydrodipicolinate reductase">
    <location>
        <begin position="1"/>
        <end position="273"/>
    </location>
</feature>
<feature type="active site" description="Proton donor/acceptor" evidence="1">
    <location>
        <position position="159"/>
    </location>
</feature>
<feature type="active site" description="Proton donor" evidence="1">
    <location>
        <position position="163"/>
    </location>
</feature>
<feature type="binding site" evidence="1">
    <location>
        <begin position="12"/>
        <end position="17"/>
    </location>
    <ligand>
        <name>NAD(+)</name>
        <dbReference type="ChEBI" id="CHEBI:57540"/>
    </ligand>
</feature>
<feature type="binding site" evidence="1">
    <location>
        <position position="38"/>
    </location>
    <ligand>
        <name>NAD(+)</name>
        <dbReference type="ChEBI" id="CHEBI:57540"/>
    </ligand>
</feature>
<feature type="binding site" evidence="1">
    <location>
        <position position="39"/>
    </location>
    <ligand>
        <name>NADP(+)</name>
        <dbReference type="ChEBI" id="CHEBI:58349"/>
    </ligand>
</feature>
<feature type="binding site" evidence="1">
    <location>
        <begin position="102"/>
        <end position="104"/>
    </location>
    <ligand>
        <name>NAD(+)</name>
        <dbReference type="ChEBI" id="CHEBI:57540"/>
    </ligand>
</feature>
<feature type="binding site" evidence="1">
    <location>
        <begin position="126"/>
        <end position="129"/>
    </location>
    <ligand>
        <name>NAD(+)</name>
        <dbReference type="ChEBI" id="CHEBI:57540"/>
    </ligand>
</feature>
<feature type="binding site" evidence="1">
    <location>
        <position position="160"/>
    </location>
    <ligand>
        <name>(S)-2,3,4,5-tetrahydrodipicolinate</name>
        <dbReference type="ChEBI" id="CHEBI:16845"/>
    </ligand>
</feature>
<feature type="binding site" evidence="1">
    <location>
        <begin position="169"/>
        <end position="170"/>
    </location>
    <ligand>
        <name>(S)-2,3,4,5-tetrahydrodipicolinate</name>
        <dbReference type="ChEBI" id="CHEBI:16845"/>
    </ligand>
</feature>
<sequence length="273" mass="28877">MHEAQIRVAIAGAGGRMGRQLIQAAMAMEGVQLGAALEREGSSLLGSDAGELAGAGKSGVIVQSSLEAVKDDFDVFIDFTRPEGTLTHLAFCRQHGKGMVIGTTGFDDAGKQAIREASQEIAIVFAANFSVGVNVMLKLLEKAAKVMGDYSDIEIIEAHHRHKVDAPSGTALAMGEAIAGALDKNLKDCAVYSREGYTGERVPGTIGFATVRAGDIVGEHTAMFADIGERVEITHKASSRMTFANGALRSALWLKTKKNGLFDMRDVLGLDVL</sequence>
<keyword id="KW-0028">Amino-acid biosynthesis</keyword>
<keyword id="KW-0963">Cytoplasm</keyword>
<keyword id="KW-0220">Diaminopimelate biosynthesis</keyword>
<keyword id="KW-0457">Lysine biosynthesis</keyword>
<keyword id="KW-0520">NAD</keyword>
<keyword id="KW-0521">NADP</keyword>
<keyword id="KW-0560">Oxidoreductase</keyword>
<protein>
    <recommendedName>
        <fullName evidence="1">4-hydroxy-tetrahydrodipicolinate reductase</fullName>
        <shortName evidence="1">HTPA reductase</shortName>
        <ecNumber evidence="1">1.17.1.8</ecNumber>
    </recommendedName>
</protein>
<comment type="function">
    <text evidence="1">Catalyzes the conversion of 4-hydroxy-tetrahydrodipicolinate (HTPA) to tetrahydrodipicolinate.</text>
</comment>
<comment type="catalytic activity">
    <reaction evidence="1">
        <text>(S)-2,3,4,5-tetrahydrodipicolinate + NAD(+) + H2O = (2S,4S)-4-hydroxy-2,3,4,5-tetrahydrodipicolinate + NADH + H(+)</text>
        <dbReference type="Rhea" id="RHEA:35323"/>
        <dbReference type="ChEBI" id="CHEBI:15377"/>
        <dbReference type="ChEBI" id="CHEBI:15378"/>
        <dbReference type="ChEBI" id="CHEBI:16845"/>
        <dbReference type="ChEBI" id="CHEBI:57540"/>
        <dbReference type="ChEBI" id="CHEBI:57945"/>
        <dbReference type="ChEBI" id="CHEBI:67139"/>
        <dbReference type="EC" id="1.17.1.8"/>
    </reaction>
</comment>
<comment type="catalytic activity">
    <reaction evidence="1">
        <text>(S)-2,3,4,5-tetrahydrodipicolinate + NADP(+) + H2O = (2S,4S)-4-hydroxy-2,3,4,5-tetrahydrodipicolinate + NADPH + H(+)</text>
        <dbReference type="Rhea" id="RHEA:35331"/>
        <dbReference type="ChEBI" id="CHEBI:15377"/>
        <dbReference type="ChEBI" id="CHEBI:15378"/>
        <dbReference type="ChEBI" id="CHEBI:16845"/>
        <dbReference type="ChEBI" id="CHEBI:57783"/>
        <dbReference type="ChEBI" id="CHEBI:58349"/>
        <dbReference type="ChEBI" id="CHEBI:67139"/>
        <dbReference type="EC" id="1.17.1.8"/>
    </reaction>
</comment>
<comment type="pathway">
    <text evidence="1">Amino-acid biosynthesis; L-lysine biosynthesis via DAP pathway; (S)-tetrahydrodipicolinate from L-aspartate: step 4/4.</text>
</comment>
<comment type="subunit">
    <text evidence="1">Homotetramer.</text>
</comment>
<comment type="subcellular location">
    <subcellularLocation>
        <location evidence="1">Cytoplasm</location>
    </subcellularLocation>
</comment>
<comment type="similarity">
    <text evidence="1">Belongs to the DapB family.</text>
</comment>
<comment type="caution">
    <text evidence="2">Was originally thought to be a dihydrodipicolinate reductase (DHDPR), catalyzing the conversion of dihydrodipicolinate to tetrahydrodipicolinate. However, it was shown in E.coli that the substrate of the enzymatic reaction is not dihydrodipicolinate (DHDP) but in fact (2S,4S)-4-hydroxy-2,3,4,5-tetrahydrodipicolinic acid (HTPA), the product released by the DapA-catalyzed reaction.</text>
</comment>
<accession>B4T6J1</accession>
<reference key="1">
    <citation type="journal article" date="2011" name="J. Bacteriol.">
        <title>Comparative genomics of 28 Salmonella enterica isolates: evidence for CRISPR-mediated adaptive sublineage evolution.</title>
        <authorList>
            <person name="Fricke W.F."/>
            <person name="Mammel M.K."/>
            <person name="McDermott P.F."/>
            <person name="Tartera C."/>
            <person name="White D.G."/>
            <person name="Leclerc J.E."/>
            <person name="Ravel J."/>
            <person name="Cebula T.A."/>
        </authorList>
    </citation>
    <scope>NUCLEOTIDE SEQUENCE [LARGE SCALE GENOMIC DNA]</scope>
    <source>
        <strain>SL254</strain>
    </source>
</reference>
<dbReference type="EC" id="1.17.1.8" evidence="1"/>
<dbReference type="EMBL" id="CP001113">
    <property type="protein sequence ID" value="ACF64193.1"/>
    <property type="molecule type" value="Genomic_DNA"/>
</dbReference>
<dbReference type="RefSeq" id="WP_000544032.1">
    <property type="nucleotide sequence ID" value="NZ_CCMR01000003.1"/>
</dbReference>
<dbReference type="SMR" id="B4T6J1"/>
<dbReference type="KEGG" id="see:SNSL254_A0069"/>
<dbReference type="HOGENOM" id="CLU_047479_2_1_6"/>
<dbReference type="UniPathway" id="UPA00034">
    <property type="reaction ID" value="UER00018"/>
</dbReference>
<dbReference type="Proteomes" id="UP000008824">
    <property type="component" value="Chromosome"/>
</dbReference>
<dbReference type="GO" id="GO:0005829">
    <property type="term" value="C:cytosol"/>
    <property type="evidence" value="ECO:0007669"/>
    <property type="project" value="TreeGrafter"/>
</dbReference>
<dbReference type="GO" id="GO:0008839">
    <property type="term" value="F:4-hydroxy-tetrahydrodipicolinate reductase"/>
    <property type="evidence" value="ECO:0007669"/>
    <property type="project" value="UniProtKB-EC"/>
</dbReference>
<dbReference type="GO" id="GO:0051287">
    <property type="term" value="F:NAD binding"/>
    <property type="evidence" value="ECO:0007669"/>
    <property type="project" value="UniProtKB-UniRule"/>
</dbReference>
<dbReference type="GO" id="GO:0050661">
    <property type="term" value="F:NADP binding"/>
    <property type="evidence" value="ECO:0007669"/>
    <property type="project" value="UniProtKB-UniRule"/>
</dbReference>
<dbReference type="GO" id="GO:0016726">
    <property type="term" value="F:oxidoreductase activity, acting on CH or CH2 groups, NAD or NADP as acceptor"/>
    <property type="evidence" value="ECO:0007669"/>
    <property type="project" value="UniProtKB-UniRule"/>
</dbReference>
<dbReference type="GO" id="GO:0019877">
    <property type="term" value="P:diaminopimelate biosynthetic process"/>
    <property type="evidence" value="ECO:0007669"/>
    <property type="project" value="UniProtKB-UniRule"/>
</dbReference>
<dbReference type="GO" id="GO:0009089">
    <property type="term" value="P:lysine biosynthetic process via diaminopimelate"/>
    <property type="evidence" value="ECO:0007669"/>
    <property type="project" value="UniProtKB-UniRule"/>
</dbReference>
<dbReference type="CDD" id="cd02274">
    <property type="entry name" value="DHDPR_N"/>
    <property type="match status" value="1"/>
</dbReference>
<dbReference type="FunFam" id="3.30.360.10:FF:000004">
    <property type="entry name" value="4-hydroxy-tetrahydrodipicolinate reductase"/>
    <property type="match status" value="1"/>
</dbReference>
<dbReference type="FunFam" id="3.40.50.720:FF:000048">
    <property type="entry name" value="4-hydroxy-tetrahydrodipicolinate reductase"/>
    <property type="match status" value="1"/>
</dbReference>
<dbReference type="Gene3D" id="3.30.360.10">
    <property type="entry name" value="Dihydrodipicolinate Reductase, domain 2"/>
    <property type="match status" value="1"/>
</dbReference>
<dbReference type="Gene3D" id="3.40.50.720">
    <property type="entry name" value="NAD(P)-binding Rossmann-like Domain"/>
    <property type="match status" value="1"/>
</dbReference>
<dbReference type="HAMAP" id="MF_00102">
    <property type="entry name" value="DapB"/>
    <property type="match status" value="1"/>
</dbReference>
<dbReference type="InterPro" id="IPR022663">
    <property type="entry name" value="DapB_C"/>
</dbReference>
<dbReference type="InterPro" id="IPR000846">
    <property type="entry name" value="DapB_N"/>
</dbReference>
<dbReference type="InterPro" id="IPR022664">
    <property type="entry name" value="DapB_N_CS"/>
</dbReference>
<dbReference type="InterPro" id="IPR023940">
    <property type="entry name" value="DHDPR_bac"/>
</dbReference>
<dbReference type="InterPro" id="IPR036291">
    <property type="entry name" value="NAD(P)-bd_dom_sf"/>
</dbReference>
<dbReference type="NCBIfam" id="TIGR00036">
    <property type="entry name" value="dapB"/>
    <property type="match status" value="1"/>
</dbReference>
<dbReference type="PANTHER" id="PTHR20836:SF0">
    <property type="entry name" value="4-HYDROXY-TETRAHYDRODIPICOLINATE REDUCTASE 1, CHLOROPLASTIC-RELATED"/>
    <property type="match status" value="1"/>
</dbReference>
<dbReference type="PANTHER" id="PTHR20836">
    <property type="entry name" value="DIHYDRODIPICOLINATE REDUCTASE"/>
    <property type="match status" value="1"/>
</dbReference>
<dbReference type="Pfam" id="PF05173">
    <property type="entry name" value="DapB_C"/>
    <property type="match status" value="1"/>
</dbReference>
<dbReference type="Pfam" id="PF01113">
    <property type="entry name" value="DapB_N"/>
    <property type="match status" value="1"/>
</dbReference>
<dbReference type="PIRSF" id="PIRSF000161">
    <property type="entry name" value="DHPR"/>
    <property type="match status" value="1"/>
</dbReference>
<dbReference type="SUPFAM" id="SSF55347">
    <property type="entry name" value="Glyceraldehyde-3-phosphate dehydrogenase-like, C-terminal domain"/>
    <property type="match status" value="1"/>
</dbReference>
<dbReference type="SUPFAM" id="SSF51735">
    <property type="entry name" value="NAD(P)-binding Rossmann-fold domains"/>
    <property type="match status" value="1"/>
</dbReference>
<dbReference type="PROSITE" id="PS01298">
    <property type="entry name" value="DAPB"/>
    <property type="match status" value="1"/>
</dbReference>
<proteinExistence type="inferred from homology"/>
<evidence type="ECO:0000255" key="1">
    <source>
        <dbReference type="HAMAP-Rule" id="MF_00102"/>
    </source>
</evidence>
<evidence type="ECO:0000305" key="2"/>
<name>DAPB_SALNS</name>
<organism>
    <name type="scientific">Salmonella newport (strain SL254)</name>
    <dbReference type="NCBI Taxonomy" id="423368"/>
    <lineage>
        <taxon>Bacteria</taxon>
        <taxon>Pseudomonadati</taxon>
        <taxon>Pseudomonadota</taxon>
        <taxon>Gammaproteobacteria</taxon>
        <taxon>Enterobacterales</taxon>
        <taxon>Enterobacteriaceae</taxon>
        <taxon>Salmonella</taxon>
    </lineage>
</organism>
<gene>
    <name evidence="1" type="primary">dapB</name>
    <name type="ordered locus">SNSL254_A0069</name>
</gene>